<comment type="function">
    <text evidence="1">Catalyzes the thiamine diphosphate-dependent decarboxylation of 2-oxoglutarate and the subsequent addition of the resulting succinic semialdehyde-thiamine pyrophosphate anion to isochorismate to yield 2-succinyl-5-enolpyruvyl-6-hydroxy-3-cyclohexene-1-carboxylate (SEPHCHC).</text>
</comment>
<comment type="catalytic activity">
    <reaction evidence="1">
        <text>isochorismate + 2-oxoglutarate + H(+) = 5-enolpyruvoyl-6-hydroxy-2-succinyl-cyclohex-3-ene-1-carboxylate + CO2</text>
        <dbReference type="Rhea" id="RHEA:25593"/>
        <dbReference type="ChEBI" id="CHEBI:15378"/>
        <dbReference type="ChEBI" id="CHEBI:16526"/>
        <dbReference type="ChEBI" id="CHEBI:16810"/>
        <dbReference type="ChEBI" id="CHEBI:29780"/>
        <dbReference type="ChEBI" id="CHEBI:58818"/>
        <dbReference type="EC" id="2.2.1.9"/>
    </reaction>
</comment>
<comment type="cofactor">
    <cofactor evidence="1">
        <name>Mg(2+)</name>
        <dbReference type="ChEBI" id="CHEBI:18420"/>
    </cofactor>
    <cofactor evidence="1">
        <name>Mn(2+)</name>
        <dbReference type="ChEBI" id="CHEBI:29035"/>
    </cofactor>
</comment>
<comment type="cofactor">
    <cofactor evidence="1">
        <name>thiamine diphosphate</name>
        <dbReference type="ChEBI" id="CHEBI:58937"/>
    </cofactor>
    <text evidence="1">Binds 1 thiamine pyrophosphate per subunit.</text>
</comment>
<comment type="pathway">
    <text evidence="1">Quinol/quinone metabolism; 1,4-dihydroxy-2-naphthoate biosynthesis; 1,4-dihydroxy-2-naphthoate from chorismate: step 2/7.</text>
</comment>
<comment type="pathway">
    <text evidence="1">Quinol/quinone metabolism; menaquinone biosynthesis.</text>
</comment>
<comment type="subunit">
    <text evidence="1">Homodimer.</text>
</comment>
<comment type="similarity">
    <text evidence="1">Belongs to the TPP enzyme family. MenD subfamily.</text>
</comment>
<keyword id="KW-0460">Magnesium</keyword>
<keyword id="KW-0464">Manganese</keyword>
<keyword id="KW-0474">Menaquinone biosynthesis</keyword>
<keyword id="KW-0479">Metal-binding</keyword>
<keyword id="KW-1185">Reference proteome</keyword>
<keyword id="KW-0786">Thiamine pyrophosphate</keyword>
<keyword id="KW-0808">Transferase</keyword>
<protein>
    <recommendedName>
        <fullName evidence="1">2-succinyl-5-enolpyruvyl-6-hydroxy-3-cyclohexene-1-carboxylate synthase</fullName>
        <shortName evidence="1">SEPHCHC synthase</shortName>
        <ecNumber evidence="1">2.2.1.9</ecNumber>
    </recommendedName>
    <alternativeName>
        <fullName evidence="1">Menaquinone biosynthesis protein MenD</fullName>
    </alternativeName>
</protein>
<reference key="1">
    <citation type="journal article" date="2004" name="Science">
        <title>A predator unmasked: life cycle of Bdellovibrio bacteriovorus from a genomic perspective.</title>
        <authorList>
            <person name="Rendulic S."/>
            <person name="Jagtap P."/>
            <person name="Rosinus A."/>
            <person name="Eppinger M."/>
            <person name="Baar C."/>
            <person name="Lanz C."/>
            <person name="Keller H."/>
            <person name="Lambert C."/>
            <person name="Evans K.J."/>
            <person name="Goesmann A."/>
            <person name="Meyer F."/>
            <person name="Sockett R.E."/>
            <person name="Schuster S.C."/>
        </authorList>
    </citation>
    <scope>NUCLEOTIDE SEQUENCE [LARGE SCALE GENOMIC DNA]</scope>
    <source>
        <strain>ATCC 15356 / DSM 50701 / NCIMB 9529 / HD100</strain>
    </source>
</reference>
<accession>Q6MHQ6</accession>
<dbReference type="EC" id="2.2.1.9" evidence="1"/>
<dbReference type="EMBL" id="BX842655">
    <property type="protein sequence ID" value="CAE78276.1"/>
    <property type="molecule type" value="Genomic_DNA"/>
</dbReference>
<dbReference type="SMR" id="Q6MHQ6"/>
<dbReference type="STRING" id="264462.Bd3484"/>
<dbReference type="KEGG" id="bba:Bd3484"/>
<dbReference type="eggNOG" id="COG1165">
    <property type="taxonomic scope" value="Bacteria"/>
</dbReference>
<dbReference type="HOGENOM" id="CLU_006051_3_0_7"/>
<dbReference type="UniPathway" id="UPA00079"/>
<dbReference type="UniPathway" id="UPA01057">
    <property type="reaction ID" value="UER00164"/>
</dbReference>
<dbReference type="Proteomes" id="UP000008080">
    <property type="component" value="Chromosome"/>
</dbReference>
<dbReference type="GO" id="GO:0070204">
    <property type="term" value="F:2-succinyl-5-enolpyruvyl-6-hydroxy-3-cyclohexene-1-carboxylic-acid synthase activity"/>
    <property type="evidence" value="ECO:0007669"/>
    <property type="project" value="UniProtKB-UniRule"/>
</dbReference>
<dbReference type="GO" id="GO:0000287">
    <property type="term" value="F:magnesium ion binding"/>
    <property type="evidence" value="ECO:0007669"/>
    <property type="project" value="UniProtKB-UniRule"/>
</dbReference>
<dbReference type="GO" id="GO:0030145">
    <property type="term" value="F:manganese ion binding"/>
    <property type="evidence" value="ECO:0007669"/>
    <property type="project" value="UniProtKB-UniRule"/>
</dbReference>
<dbReference type="GO" id="GO:0030976">
    <property type="term" value="F:thiamine pyrophosphate binding"/>
    <property type="evidence" value="ECO:0007669"/>
    <property type="project" value="UniProtKB-UniRule"/>
</dbReference>
<dbReference type="GO" id="GO:0009234">
    <property type="term" value="P:menaquinone biosynthetic process"/>
    <property type="evidence" value="ECO:0007669"/>
    <property type="project" value="UniProtKB-UniRule"/>
</dbReference>
<dbReference type="CDD" id="cd02009">
    <property type="entry name" value="TPP_SHCHC_synthase"/>
    <property type="match status" value="1"/>
</dbReference>
<dbReference type="Gene3D" id="3.40.50.970">
    <property type="match status" value="2"/>
</dbReference>
<dbReference type="HAMAP" id="MF_01659">
    <property type="entry name" value="MenD"/>
    <property type="match status" value="1"/>
</dbReference>
<dbReference type="InterPro" id="IPR004433">
    <property type="entry name" value="MenaQ_synth_MenD"/>
</dbReference>
<dbReference type="InterPro" id="IPR029061">
    <property type="entry name" value="THDP-binding"/>
</dbReference>
<dbReference type="InterPro" id="IPR012001">
    <property type="entry name" value="Thiamin_PyroP_enz_TPP-bd_dom"/>
</dbReference>
<dbReference type="NCBIfam" id="TIGR00173">
    <property type="entry name" value="menD"/>
    <property type="match status" value="1"/>
</dbReference>
<dbReference type="PANTHER" id="PTHR42916">
    <property type="entry name" value="2-SUCCINYL-5-ENOLPYRUVYL-6-HYDROXY-3-CYCLOHEXENE-1-CARBOXYLATE SYNTHASE"/>
    <property type="match status" value="1"/>
</dbReference>
<dbReference type="PANTHER" id="PTHR42916:SF1">
    <property type="entry name" value="PROTEIN PHYLLO, CHLOROPLASTIC"/>
    <property type="match status" value="1"/>
</dbReference>
<dbReference type="Pfam" id="PF02776">
    <property type="entry name" value="TPP_enzyme_N"/>
    <property type="match status" value="1"/>
</dbReference>
<dbReference type="PIRSF" id="PIRSF004983">
    <property type="entry name" value="MenD"/>
    <property type="match status" value="1"/>
</dbReference>
<dbReference type="SUPFAM" id="SSF52518">
    <property type="entry name" value="Thiamin diphosphate-binding fold (THDP-binding)"/>
    <property type="match status" value="2"/>
</dbReference>
<organism>
    <name type="scientific">Bdellovibrio bacteriovorus (strain ATCC 15356 / DSM 50701 / NCIMB 9529 / HD100)</name>
    <dbReference type="NCBI Taxonomy" id="264462"/>
    <lineage>
        <taxon>Bacteria</taxon>
        <taxon>Pseudomonadati</taxon>
        <taxon>Bdellovibrionota</taxon>
        <taxon>Bdellovibrionia</taxon>
        <taxon>Bdellovibrionales</taxon>
        <taxon>Pseudobdellovibrionaceae</taxon>
        <taxon>Bdellovibrio</taxon>
    </lineage>
</organism>
<proteinExistence type="inferred from homology"/>
<sequence>MTNMELAAKVIQELVHTGVREFILCAGARNSPMVHILDECKNLKVYSFFEERAAGFFALGRIASTRRPVAVITTSGTAVAELLPAAVEGTYSSLPLIMVTADRPKHYRGSGAPQTIEQVGIFSYYNEVALDLDSENSHLSFKSLSWKKPIHVNVSFEEPLIDGPVPQIHIPSVSERTKLPVQIPLGTLKEMETFVNTHKPLVMVGILPEKAYGTVLDFLKQYKAPVYCEGISSLRGHPDLKDVEIRSGEKMIHRVLEMGVCDSILRIGGIPTARVWRDLEDKYKELPVFSVSFNHFTGLSRPVQHCNSLDLLSQVEFSYPHHENVKVNIEDAARATQIRQLLDKYPDSEQGMIYAISKRMKGSSVYLGNSLPIREWDSSSSHDFPPARVAANRGANGIDGQISTFLGWAHPELENWCLVGDLTALYDLSSLWVTSQLDAKKFRVVVINNGGGQIFHRMFKKEIFINKHQISFESWAKMWNWSYDKWHTIPEDNKELNLADHQIIELSPNWEHTQEFWKEYDLLWKE</sequence>
<feature type="chain" id="PRO_0000341718" description="2-succinyl-5-enolpyruvyl-6-hydroxy-3-cyclohexene-1-carboxylate synthase">
    <location>
        <begin position="1"/>
        <end position="526"/>
    </location>
</feature>
<name>MEND_BDEBA</name>
<gene>
    <name evidence="1" type="primary">menD</name>
    <name type="ordered locus">Bd3484</name>
</gene>
<evidence type="ECO:0000255" key="1">
    <source>
        <dbReference type="HAMAP-Rule" id="MF_01659"/>
    </source>
</evidence>